<keyword id="KW-0963">Cytoplasm</keyword>
<keyword id="KW-0489">Methyltransferase</keyword>
<keyword id="KW-0698">rRNA processing</keyword>
<keyword id="KW-0949">S-adenosyl-L-methionine</keyword>
<keyword id="KW-0808">Transferase</keyword>
<name>RSMG_BRUA1</name>
<organism>
    <name type="scientific">Brucella abortus (strain S19)</name>
    <dbReference type="NCBI Taxonomy" id="430066"/>
    <lineage>
        <taxon>Bacteria</taxon>
        <taxon>Pseudomonadati</taxon>
        <taxon>Pseudomonadota</taxon>
        <taxon>Alphaproteobacteria</taxon>
        <taxon>Hyphomicrobiales</taxon>
        <taxon>Brucellaceae</taxon>
        <taxon>Brucella/Ochrobactrum group</taxon>
        <taxon>Brucella</taxon>
    </lineage>
</organism>
<reference key="1">
    <citation type="journal article" date="2008" name="PLoS ONE">
        <title>Genome sequence of Brucella abortus vaccine strain S19 compared to virulent strains yields candidate virulence genes.</title>
        <authorList>
            <person name="Crasta O.R."/>
            <person name="Folkerts O."/>
            <person name="Fei Z."/>
            <person name="Mane S.P."/>
            <person name="Evans C."/>
            <person name="Martino-Catt S."/>
            <person name="Bricker B."/>
            <person name="Yu G."/>
            <person name="Du L."/>
            <person name="Sobral B.W."/>
        </authorList>
    </citation>
    <scope>NUCLEOTIDE SEQUENCE [LARGE SCALE GENOMIC DNA]</scope>
    <source>
        <strain>S19</strain>
    </source>
</reference>
<protein>
    <recommendedName>
        <fullName evidence="1">Ribosomal RNA small subunit methyltransferase G</fullName>
        <ecNumber evidence="1">2.1.1.170</ecNumber>
    </recommendedName>
    <alternativeName>
        <fullName evidence="1">16S rRNA 7-methylguanosine methyltransferase</fullName>
        <shortName evidence="1">16S rRNA m7G methyltransferase</shortName>
    </alternativeName>
</protein>
<feature type="chain" id="PRO_1000092615" description="Ribosomal RNA small subunit methyltransferase G">
    <location>
        <begin position="1"/>
        <end position="213"/>
    </location>
</feature>
<feature type="binding site" evidence="1">
    <location>
        <position position="75"/>
    </location>
    <ligand>
        <name>S-adenosyl-L-methionine</name>
        <dbReference type="ChEBI" id="CHEBI:59789"/>
    </ligand>
</feature>
<feature type="binding site" evidence="1">
    <location>
        <position position="80"/>
    </location>
    <ligand>
        <name>S-adenosyl-L-methionine</name>
        <dbReference type="ChEBI" id="CHEBI:59789"/>
    </ligand>
</feature>
<feature type="binding site" evidence="1">
    <location>
        <begin position="128"/>
        <end position="129"/>
    </location>
    <ligand>
        <name>S-adenosyl-L-methionine</name>
        <dbReference type="ChEBI" id="CHEBI:59789"/>
    </ligand>
</feature>
<feature type="binding site" evidence="1">
    <location>
        <position position="144"/>
    </location>
    <ligand>
        <name>S-adenosyl-L-methionine</name>
        <dbReference type="ChEBI" id="CHEBI:59789"/>
    </ligand>
</feature>
<gene>
    <name evidence="1" type="primary">rsmG</name>
    <name type="ordered locus">BAbS19_I19290</name>
</gene>
<proteinExistence type="inferred from homology"/>
<comment type="function">
    <text evidence="1">Specifically methylates the N7 position of guanine in position 527 of 16S rRNA.</text>
</comment>
<comment type="catalytic activity">
    <reaction evidence="1">
        <text>guanosine(527) in 16S rRNA + S-adenosyl-L-methionine = N(7)-methylguanosine(527) in 16S rRNA + S-adenosyl-L-homocysteine</text>
        <dbReference type="Rhea" id="RHEA:42732"/>
        <dbReference type="Rhea" id="RHEA-COMP:10209"/>
        <dbReference type="Rhea" id="RHEA-COMP:10210"/>
        <dbReference type="ChEBI" id="CHEBI:57856"/>
        <dbReference type="ChEBI" id="CHEBI:59789"/>
        <dbReference type="ChEBI" id="CHEBI:74269"/>
        <dbReference type="ChEBI" id="CHEBI:74480"/>
        <dbReference type="EC" id="2.1.1.170"/>
    </reaction>
</comment>
<comment type="subcellular location">
    <subcellularLocation>
        <location evidence="1">Cytoplasm</location>
    </subcellularLocation>
</comment>
<comment type="similarity">
    <text evidence="1">Belongs to the methyltransferase superfamily. RNA methyltransferase RsmG family.</text>
</comment>
<dbReference type="EC" id="2.1.1.170" evidence="1"/>
<dbReference type="EMBL" id="CP000887">
    <property type="protein sequence ID" value="ACD73411.1"/>
    <property type="molecule type" value="Genomic_DNA"/>
</dbReference>
<dbReference type="RefSeq" id="WP_002967027.1">
    <property type="nucleotide sequence ID" value="NC_010742.1"/>
</dbReference>
<dbReference type="SMR" id="B2S959"/>
<dbReference type="GeneID" id="97534679"/>
<dbReference type="KEGG" id="bmc:BAbS19_I19290"/>
<dbReference type="HOGENOM" id="CLU_065341_1_1_5"/>
<dbReference type="Proteomes" id="UP000002565">
    <property type="component" value="Chromosome 1"/>
</dbReference>
<dbReference type="GO" id="GO:0005829">
    <property type="term" value="C:cytosol"/>
    <property type="evidence" value="ECO:0007669"/>
    <property type="project" value="TreeGrafter"/>
</dbReference>
<dbReference type="GO" id="GO:0070043">
    <property type="term" value="F:rRNA (guanine-N7-)-methyltransferase activity"/>
    <property type="evidence" value="ECO:0007669"/>
    <property type="project" value="UniProtKB-UniRule"/>
</dbReference>
<dbReference type="Gene3D" id="3.40.50.150">
    <property type="entry name" value="Vaccinia Virus protein VP39"/>
    <property type="match status" value="1"/>
</dbReference>
<dbReference type="HAMAP" id="MF_00074">
    <property type="entry name" value="16SrRNA_methyltr_G"/>
    <property type="match status" value="1"/>
</dbReference>
<dbReference type="InterPro" id="IPR003682">
    <property type="entry name" value="rRNA_ssu_MeTfrase_G"/>
</dbReference>
<dbReference type="InterPro" id="IPR029063">
    <property type="entry name" value="SAM-dependent_MTases_sf"/>
</dbReference>
<dbReference type="NCBIfam" id="TIGR00138">
    <property type="entry name" value="rsmG_gidB"/>
    <property type="match status" value="1"/>
</dbReference>
<dbReference type="PANTHER" id="PTHR31760">
    <property type="entry name" value="S-ADENOSYL-L-METHIONINE-DEPENDENT METHYLTRANSFERASES SUPERFAMILY PROTEIN"/>
    <property type="match status" value="1"/>
</dbReference>
<dbReference type="PANTHER" id="PTHR31760:SF0">
    <property type="entry name" value="S-ADENOSYL-L-METHIONINE-DEPENDENT METHYLTRANSFERASES SUPERFAMILY PROTEIN"/>
    <property type="match status" value="1"/>
</dbReference>
<dbReference type="Pfam" id="PF02527">
    <property type="entry name" value="GidB"/>
    <property type="match status" value="1"/>
</dbReference>
<dbReference type="PIRSF" id="PIRSF003078">
    <property type="entry name" value="GidB"/>
    <property type="match status" value="1"/>
</dbReference>
<dbReference type="SUPFAM" id="SSF53335">
    <property type="entry name" value="S-adenosyl-L-methionine-dependent methyltransferases"/>
    <property type="match status" value="1"/>
</dbReference>
<sequence length="213" mass="23473">MSADIRFDSLKTIVPAVSRETADRLIAFEDLFRKWSKAINLASPSTLADLWNRHILDSAQLFPLAKEATRWLDIGSGGGFPGIVTACFLAERSGGCIDLVESAGKKAAFLRTAAGHLHVPARVHSARIESMWEKIETPQVVTARALASLGDLFTLAEPWLSDGAKALFQKGRDYQREIDESRVGWSFDLVKHPSAIDQASVILEISNLRRKTD</sequence>
<accession>B2S959</accession>
<evidence type="ECO:0000255" key="1">
    <source>
        <dbReference type="HAMAP-Rule" id="MF_00074"/>
    </source>
</evidence>